<organism>
    <name type="scientific">Prochlorococcus marinus (strain MIT 9515)</name>
    <dbReference type="NCBI Taxonomy" id="167542"/>
    <lineage>
        <taxon>Bacteria</taxon>
        <taxon>Bacillati</taxon>
        <taxon>Cyanobacteriota</taxon>
        <taxon>Cyanophyceae</taxon>
        <taxon>Synechococcales</taxon>
        <taxon>Prochlorococcaceae</taxon>
        <taxon>Prochlorococcus</taxon>
    </lineage>
</organism>
<feature type="chain" id="PRO_0000353646" description="NAD(P)H-quinone oxidoreductase subunit O">
    <location>
        <begin position="1"/>
        <end position="80"/>
    </location>
</feature>
<sequence>MSETIPKKPLKKGSLVFVDKNIYDKSIEALASDSDLPAYIFEGPGEILGIKEEYAQVRWRRPVPDVWFKLDQLKEYLASE</sequence>
<comment type="function">
    <text evidence="1">NDH-1 shuttles electrons from an unknown electron donor, via FMN and iron-sulfur (Fe-S) centers, to quinones in the respiratory and/or the photosynthetic chain. The immediate electron acceptor for the enzyme in this species is believed to be plastoquinone. Couples the redox reaction to proton translocation, and thus conserves the redox energy in a proton gradient. Cyanobacterial NDH-1 also plays a role in inorganic carbon-concentration.</text>
</comment>
<comment type="catalytic activity">
    <reaction evidence="1">
        <text>a plastoquinone + NADH + (n+1) H(+)(in) = a plastoquinol + NAD(+) + n H(+)(out)</text>
        <dbReference type="Rhea" id="RHEA:42608"/>
        <dbReference type="Rhea" id="RHEA-COMP:9561"/>
        <dbReference type="Rhea" id="RHEA-COMP:9562"/>
        <dbReference type="ChEBI" id="CHEBI:15378"/>
        <dbReference type="ChEBI" id="CHEBI:17757"/>
        <dbReference type="ChEBI" id="CHEBI:57540"/>
        <dbReference type="ChEBI" id="CHEBI:57945"/>
        <dbReference type="ChEBI" id="CHEBI:62192"/>
    </reaction>
</comment>
<comment type="catalytic activity">
    <reaction evidence="1">
        <text>a plastoquinone + NADPH + (n+1) H(+)(in) = a plastoquinol + NADP(+) + n H(+)(out)</text>
        <dbReference type="Rhea" id="RHEA:42612"/>
        <dbReference type="Rhea" id="RHEA-COMP:9561"/>
        <dbReference type="Rhea" id="RHEA-COMP:9562"/>
        <dbReference type="ChEBI" id="CHEBI:15378"/>
        <dbReference type="ChEBI" id="CHEBI:17757"/>
        <dbReference type="ChEBI" id="CHEBI:57783"/>
        <dbReference type="ChEBI" id="CHEBI:58349"/>
        <dbReference type="ChEBI" id="CHEBI:62192"/>
    </reaction>
</comment>
<comment type="subunit">
    <text evidence="1">NDH-1 can be composed of about 15 different subunits; different subcomplexes with different compositions have been identified which probably have different functions.</text>
</comment>
<comment type="subcellular location">
    <subcellularLocation>
        <location evidence="1">Cellular thylakoid membrane</location>
        <topology evidence="1">Peripheral membrane protein</topology>
        <orientation evidence="1">Cytoplasmic side</orientation>
    </subcellularLocation>
</comment>
<comment type="similarity">
    <text evidence="1">Belongs to the complex I NdhO subunit family.</text>
</comment>
<dbReference type="EC" id="7.1.1.-" evidence="1"/>
<dbReference type="EMBL" id="CP000552">
    <property type="protein sequence ID" value="ABM71344.1"/>
    <property type="molecule type" value="Genomic_DNA"/>
</dbReference>
<dbReference type="RefSeq" id="WP_011819459.1">
    <property type="nucleotide sequence ID" value="NC_008817.1"/>
</dbReference>
<dbReference type="SMR" id="A2BU83"/>
<dbReference type="STRING" id="167542.P9515_01351"/>
<dbReference type="GeneID" id="60201608"/>
<dbReference type="KEGG" id="pmc:P9515_01351"/>
<dbReference type="eggNOG" id="ENOG5031XXZ">
    <property type="taxonomic scope" value="Bacteria"/>
</dbReference>
<dbReference type="HOGENOM" id="CLU_195299_0_0_3"/>
<dbReference type="OrthoDB" id="426633at2"/>
<dbReference type="Proteomes" id="UP000001589">
    <property type="component" value="Chromosome"/>
</dbReference>
<dbReference type="GO" id="GO:0031676">
    <property type="term" value="C:plasma membrane-derived thylakoid membrane"/>
    <property type="evidence" value="ECO:0007669"/>
    <property type="project" value="UniProtKB-SubCell"/>
</dbReference>
<dbReference type="GO" id="GO:0016655">
    <property type="term" value="F:oxidoreductase activity, acting on NAD(P)H, quinone or similar compound as acceptor"/>
    <property type="evidence" value="ECO:0007669"/>
    <property type="project" value="UniProtKB-UniRule"/>
</dbReference>
<dbReference type="GO" id="GO:0048038">
    <property type="term" value="F:quinone binding"/>
    <property type="evidence" value="ECO:0007669"/>
    <property type="project" value="UniProtKB-KW"/>
</dbReference>
<dbReference type="HAMAP" id="MF_01354">
    <property type="entry name" value="NDH1_NDH1O"/>
    <property type="match status" value="1"/>
</dbReference>
<dbReference type="InterPro" id="IPR020905">
    <property type="entry name" value="NdhO"/>
</dbReference>
<dbReference type="Pfam" id="PF11910">
    <property type="entry name" value="NdhO"/>
    <property type="match status" value="1"/>
</dbReference>
<keyword id="KW-0472">Membrane</keyword>
<keyword id="KW-0520">NAD</keyword>
<keyword id="KW-0521">NADP</keyword>
<keyword id="KW-0618">Plastoquinone</keyword>
<keyword id="KW-0874">Quinone</keyword>
<keyword id="KW-0793">Thylakoid</keyword>
<keyword id="KW-1278">Translocase</keyword>
<keyword id="KW-0813">Transport</keyword>
<evidence type="ECO:0000255" key="1">
    <source>
        <dbReference type="HAMAP-Rule" id="MF_01354"/>
    </source>
</evidence>
<name>NDHO_PROM5</name>
<protein>
    <recommendedName>
        <fullName evidence="1">NAD(P)H-quinone oxidoreductase subunit O</fullName>
        <ecNumber evidence="1">7.1.1.-</ecNumber>
    </recommendedName>
    <alternativeName>
        <fullName evidence="1">NAD(P)H dehydrogenase I subunit O</fullName>
    </alternativeName>
    <alternativeName>
        <fullName>NDH-1 subunit O</fullName>
    </alternativeName>
    <alternativeName>
        <fullName>NDH-O</fullName>
    </alternativeName>
</protein>
<reference key="1">
    <citation type="journal article" date="2007" name="PLoS Genet.">
        <title>Patterns and implications of gene gain and loss in the evolution of Prochlorococcus.</title>
        <authorList>
            <person name="Kettler G.C."/>
            <person name="Martiny A.C."/>
            <person name="Huang K."/>
            <person name="Zucker J."/>
            <person name="Coleman M.L."/>
            <person name="Rodrigue S."/>
            <person name="Chen F."/>
            <person name="Lapidus A."/>
            <person name="Ferriera S."/>
            <person name="Johnson J."/>
            <person name="Steglich C."/>
            <person name="Church G.M."/>
            <person name="Richardson P."/>
            <person name="Chisholm S.W."/>
        </authorList>
    </citation>
    <scope>NUCLEOTIDE SEQUENCE [LARGE SCALE GENOMIC DNA]</scope>
    <source>
        <strain>MIT 9515</strain>
    </source>
</reference>
<proteinExistence type="inferred from homology"/>
<gene>
    <name evidence="1" type="primary">ndhO</name>
    <name type="ordered locus">P9515_01351</name>
</gene>
<accession>A2BU83</accession>